<protein>
    <recommendedName>
        <fullName>Transcription factor tau subunit sfc4</fullName>
    </recommendedName>
    <alternativeName>
        <fullName>TFIIIC subunit sfc4</fullName>
    </alternativeName>
    <alternativeName>
        <fullName>Transcription factor C subunit 4</fullName>
    </alternativeName>
</protein>
<comment type="function">
    <text evidence="1 4">TFIIIC mediates tRNA and 5S RNA gene activation by binding to intragenic promoter elements. Upstream of the transcription start site, TFIIIC assembles the initiation complex TFIIIB-TFIIIC-tDNA, which is sufficient for RNA polymerase III recruitment and function. Part of the tauA domain of TFIIIC that binds boxA DNA promoter sites of tRNA and similar genes. Sfc4 is the TFIIIB assembling subunit of TFIIIC.</text>
</comment>
<comment type="subunit">
    <text evidence="4">Component of the TFIIIC complex including sfc1, sfc3, sfc4, sfc6 and sfc7. The subunits are organized in two globular domains, tauA and tauB, connected by a proteolysis-sensitive and flexible linker. Interacts with sfc1, sfc3 and sfc6.</text>
</comment>
<comment type="subcellular location">
    <subcellularLocation>
        <location evidence="5">Nucleus</location>
    </subcellularLocation>
</comment>
<comment type="PTM">
    <text evidence="1">Phosphorylated.</text>
</comment>
<gene>
    <name evidence="7" type="primary">sfc4</name>
    <name evidence="1" type="synonym">tfc4</name>
    <name type="ORF">SPCC16C4.14c</name>
</gene>
<evidence type="ECO:0000250" key="1">
    <source>
        <dbReference type="UniProtKB" id="P33339"/>
    </source>
</evidence>
<evidence type="ECO:0000255" key="2"/>
<evidence type="ECO:0000256" key="3">
    <source>
        <dbReference type="SAM" id="MobiDB-lite"/>
    </source>
</evidence>
<evidence type="ECO:0000269" key="4">
    <source>
    </source>
</evidence>
<evidence type="ECO:0000269" key="5">
    <source>
    </source>
</evidence>
<evidence type="ECO:0000305" key="6"/>
<evidence type="ECO:0000312" key="7">
    <source>
        <dbReference type="EMBL" id="CAA20753.1"/>
    </source>
</evidence>
<keyword id="KW-0175">Coiled coil</keyword>
<keyword id="KW-0238">DNA-binding</keyword>
<keyword id="KW-0539">Nucleus</keyword>
<keyword id="KW-0597">Phosphoprotein</keyword>
<keyword id="KW-1185">Reference proteome</keyword>
<keyword id="KW-0677">Repeat</keyword>
<keyword id="KW-0802">TPR repeat</keyword>
<keyword id="KW-0804">Transcription</keyword>
<keyword id="KW-0805">Transcription regulation</keyword>
<dbReference type="EMBL" id="CU329672">
    <property type="protein sequence ID" value="CAA20753.1"/>
    <property type="molecule type" value="Genomic_DNA"/>
</dbReference>
<dbReference type="PIR" id="T41104">
    <property type="entry name" value="T41104"/>
</dbReference>
<dbReference type="RefSeq" id="NP_587924.1">
    <property type="nucleotide sequence ID" value="NM_001022915.2"/>
</dbReference>
<dbReference type="SMR" id="O74458"/>
<dbReference type="BioGRID" id="275758">
    <property type="interactions" value="15"/>
</dbReference>
<dbReference type="ComplexPortal" id="CPX-8903">
    <property type="entry name" value="General transcription factor TFIIIC complex"/>
</dbReference>
<dbReference type="FunCoup" id="O74458">
    <property type="interactions" value="766"/>
</dbReference>
<dbReference type="IntAct" id="O74458">
    <property type="interactions" value="1"/>
</dbReference>
<dbReference type="STRING" id="284812.O74458"/>
<dbReference type="iPTMnet" id="O74458"/>
<dbReference type="PaxDb" id="4896-SPCC16C4.14c.1"/>
<dbReference type="EnsemblFungi" id="SPCC16C4.14c.1">
    <property type="protein sequence ID" value="SPCC16C4.14c.1:pep"/>
    <property type="gene ID" value="SPCC16C4.14c"/>
</dbReference>
<dbReference type="GeneID" id="2539187"/>
<dbReference type="KEGG" id="spo:2539187"/>
<dbReference type="PomBase" id="SPCC16C4.14c">
    <property type="gene designation" value="sfc4"/>
</dbReference>
<dbReference type="VEuPathDB" id="FungiDB:SPCC16C4.14c"/>
<dbReference type="eggNOG" id="KOG2076">
    <property type="taxonomic scope" value="Eukaryota"/>
</dbReference>
<dbReference type="HOGENOM" id="CLU_002391_0_1_1"/>
<dbReference type="InParanoid" id="O74458"/>
<dbReference type="OMA" id="SSPNMKF"/>
<dbReference type="PhylomeDB" id="O74458"/>
<dbReference type="Reactome" id="R-SPO-76061">
    <property type="pathway name" value="RNA Polymerase III Transcription Initiation From Type 1 Promoter"/>
</dbReference>
<dbReference type="Reactome" id="R-SPO-76066">
    <property type="pathway name" value="RNA Polymerase III Transcription Initiation From Type 2 Promoter"/>
</dbReference>
<dbReference type="PRO" id="PR:O74458"/>
<dbReference type="Proteomes" id="UP000002485">
    <property type="component" value="Chromosome III"/>
</dbReference>
<dbReference type="GO" id="GO:0005829">
    <property type="term" value="C:cytosol"/>
    <property type="evidence" value="ECO:0007005"/>
    <property type="project" value="PomBase"/>
</dbReference>
<dbReference type="GO" id="GO:0005634">
    <property type="term" value="C:nucleus"/>
    <property type="evidence" value="ECO:0007005"/>
    <property type="project" value="PomBase"/>
</dbReference>
<dbReference type="GO" id="GO:0000127">
    <property type="term" value="C:transcription factor TFIIIC complex"/>
    <property type="evidence" value="ECO:0000314"/>
    <property type="project" value="PomBase"/>
</dbReference>
<dbReference type="GO" id="GO:0003677">
    <property type="term" value="F:DNA binding"/>
    <property type="evidence" value="ECO:0007669"/>
    <property type="project" value="UniProtKB-KW"/>
</dbReference>
<dbReference type="GO" id="GO:0000995">
    <property type="term" value="F:RNA polymerase III general transcription initiation factor activity"/>
    <property type="evidence" value="ECO:0000314"/>
    <property type="project" value="PomBase"/>
</dbReference>
<dbReference type="GO" id="GO:0006383">
    <property type="term" value="P:transcription by RNA polymerase III"/>
    <property type="evidence" value="ECO:0000318"/>
    <property type="project" value="GO_Central"/>
</dbReference>
<dbReference type="GO" id="GO:0006384">
    <property type="term" value="P:transcription initiation at RNA polymerase III promoter"/>
    <property type="evidence" value="ECO:0000314"/>
    <property type="project" value="PomBase"/>
</dbReference>
<dbReference type="FunFam" id="1.25.40.10:FF:000923">
    <property type="entry name" value="Transcription factor IIIC-gamma subunit"/>
    <property type="match status" value="1"/>
</dbReference>
<dbReference type="FunFam" id="1.25.40.10:FF:003725">
    <property type="entry name" value="Transcription factor tau subunit sfc4"/>
    <property type="match status" value="1"/>
</dbReference>
<dbReference type="Gene3D" id="1.25.40.10">
    <property type="entry name" value="Tetratricopeptide repeat domain"/>
    <property type="match status" value="3"/>
</dbReference>
<dbReference type="InterPro" id="IPR039340">
    <property type="entry name" value="Tfc4/TFIIIC-102/Sfc4"/>
</dbReference>
<dbReference type="InterPro" id="IPR011990">
    <property type="entry name" value="TPR-like_helical_dom_sf"/>
</dbReference>
<dbReference type="InterPro" id="IPR019734">
    <property type="entry name" value="TPR_rpt"/>
</dbReference>
<dbReference type="PANTHER" id="PTHR23082:SF0">
    <property type="entry name" value="GENERAL TRANSCRIPTION FACTOR 3C POLYPEPTIDE 3"/>
    <property type="match status" value="1"/>
</dbReference>
<dbReference type="PANTHER" id="PTHR23082">
    <property type="entry name" value="TRANSCRIPTION INITIATION FACTOR IIIC TFIIIC , POLYPEPTIDE 3-RELATED"/>
    <property type="match status" value="1"/>
</dbReference>
<dbReference type="Pfam" id="PF13181">
    <property type="entry name" value="TPR_8"/>
    <property type="match status" value="2"/>
</dbReference>
<dbReference type="SMART" id="SM00028">
    <property type="entry name" value="TPR"/>
    <property type="match status" value="7"/>
</dbReference>
<dbReference type="SUPFAM" id="SSF48452">
    <property type="entry name" value="TPR-like"/>
    <property type="match status" value="3"/>
</dbReference>
<dbReference type="PROSITE" id="PS50005">
    <property type="entry name" value="TPR"/>
    <property type="match status" value="8"/>
</dbReference>
<dbReference type="PROSITE" id="PS50293">
    <property type="entry name" value="TPR_REGION"/>
    <property type="match status" value="4"/>
</dbReference>
<reference evidence="7" key="1">
    <citation type="journal article" date="2002" name="Nature">
        <title>The genome sequence of Schizosaccharomyces pombe.</title>
        <authorList>
            <person name="Wood V."/>
            <person name="Gwilliam R."/>
            <person name="Rajandream M.A."/>
            <person name="Lyne M.H."/>
            <person name="Lyne R."/>
            <person name="Stewart A."/>
            <person name="Sgouros J.G."/>
            <person name="Peat N."/>
            <person name="Hayles J."/>
            <person name="Baker S.G."/>
            <person name="Basham D."/>
            <person name="Bowman S."/>
            <person name="Brooks K."/>
            <person name="Brown D."/>
            <person name="Brown S."/>
            <person name="Chillingworth T."/>
            <person name="Churcher C.M."/>
            <person name="Collins M."/>
            <person name="Connor R."/>
            <person name="Cronin A."/>
            <person name="Davis P."/>
            <person name="Feltwell T."/>
            <person name="Fraser A."/>
            <person name="Gentles S."/>
            <person name="Goble A."/>
            <person name="Hamlin N."/>
            <person name="Harris D.E."/>
            <person name="Hidalgo J."/>
            <person name="Hodgson G."/>
            <person name="Holroyd S."/>
            <person name="Hornsby T."/>
            <person name="Howarth S."/>
            <person name="Huckle E.J."/>
            <person name="Hunt S."/>
            <person name="Jagels K."/>
            <person name="James K.D."/>
            <person name="Jones L."/>
            <person name="Jones M."/>
            <person name="Leather S."/>
            <person name="McDonald S."/>
            <person name="McLean J."/>
            <person name="Mooney P."/>
            <person name="Moule S."/>
            <person name="Mungall K.L."/>
            <person name="Murphy L.D."/>
            <person name="Niblett D."/>
            <person name="Odell C."/>
            <person name="Oliver K."/>
            <person name="O'Neil S."/>
            <person name="Pearson D."/>
            <person name="Quail M.A."/>
            <person name="Rabbinowitsch E."/>
            <person name="Rutherford K.M."/>
            <person name="Rutter S."/>
            <person name="Saunders D."/>
            <person name="Seeger K."/>
            <person name="Sharp S."/>
            <person name="Skelton J."/>
            <person name="Simmonds M.N."/>
            <person name="Squares R."/>
            <person name="Squares S."/>
            <person name="Stevens K."/>
            <person name="Taylor K."/>
            <person name="Taylor R.G."/>
            <person name="Tivey A."/>
            <person name="Walsh S.V."/>
            <person name="Warren T."/>
            <person name="Whitehead S."/>
            <person name="Woodward J.R."/>
            <person name="Volckaert G."/>
            <person name="Aert R."/>
            <person name="Robben J."/>
            <person name="Grymonprez B."/>
            <person name="Weltjens I."/>
            <person name="Vanstreels E."/>
            <person name="Rieger M."/>
            <person name="Schaefer M."/>
            <person name="Mueller-Auer S."/>
            <person name="Gabel C."/>
            <person name="Fuchs M."/>
            <person name="Duesterhoeft A."/>
            <person name="Fritzc C."/>
            <person name="Holzer E."/>
            <person name="Moestl D."/>
            <person name="Hilbert H."/>
            <person name="Borzym K."/>
            <person name="Langer I."/>
            <person name="Beck A."/>
            <person name="Lehrach H."/>
            <person name="Reinhardt R."/>
            <person name="Pohl T.M."/>
            <person name="Eger P."/>
            <person name="Zimmermann W."/>
            <person name="Wedler H."/>
            <person name="Wambutt R."/>
            <person name="Purnelle B."/>
            <person name="Goffeau A."/>
            <person name="Cadieu E."/>
            <person name="Dreano S."/>
            <person name="Gloux S."/>
            <person name="Lelaure V."/>
            <person name="Mottier S."/>
            <person name="Galibert F."/>
            <person name="Aves S.J."/>
            <person name="Xiang Z."/>
            <person name="Hunt C."/>
            <person name="Moore K."/>
            <person name="Hurst S.M."/>
            <person name="Lucas M."/>
            <person name="Rochet M."/>
            <person name="Gaillardin C."/>
            <person name="Tallada V.A."/>
            <person name="Garzon A."/>
            <person name="Thode G."/>
            <person name="Daga R.R."/>
            <person name="Cruzado L."/>
            <person name="Jimenez J."/>
            <person name="Sanchez M."/>
            <person name="del Rey F."/>
            <person name="Benito J."/>
            <person name="Dominguez A."/>
            <person name="Revuelta J.L."/>
            <person name="Moreno S."/>
            <person name="Armstrong J."/>
            <person name="Forsburg S.L."/>
            <person name="Cerutti L."/>
            <person name="Lowe T."/>
            <person name="McCombie W.R."/>
            <person name="Paulsen I."/>
            <person name="Potashkin J."/>
            <person name="Shpakovski G.V."/>
            <person name="Ussery D."/>
            <person name="Barrell B.G."/>
            <person name="Nurse P."/>
        </authorList>
    </citation>
    <scope>NUCLEOTIDE SEQUENCE [LARGE SCALE GENOMIC DNA]</scope>
    <source>
        <strain>972 / ATCC 24843</strain>
    </source>
</reference>
<reference evidence="6" key="2">
    <citation type="journal article" date="2000" name="J. Biol. Chem.">
        <title>Isolation and cloning of four subunits of a fission yeast TFIIIC complex that includes an ortholog of the human regulatory protein TFIIICbeta.</title>
        <authorList>
            <person name="Huang Y."/>
            <person name="Hamada M."/>
            <person name="Maraia R.J."/>
        </authorList>
    </citation>
    <scope>FUNCTION</scope>
    <scope>IDENTIFICATION IN TFIIIC</scope>
    <scope>INTERACTION WITH SFC1; SFC3 AND SFC6</scope>
</reference>
<reference evidence="6" key="3">
    <citation type="journal article" date="2006" name="Nat. Biotechnol.">
        <title>ORFeome cloning and global analysis of protein localization in the fission yeast Schizosaccharomyces pombe.</title>
        <authorList>
            <person name="Matsuyama A."/>
            <person name="Arai R."/>
            <person name="Yashiroda Y."/>
            <person name="Shirai A."/>
            <person name="Kamata A."/>
            <person name="Sekido S."/>
            <person name="Kobayashi Y."/>
            <person name="Hashimoto A."/>
            <person name="Hamamoto M."/>
            <person name="Hiraoka Y."/>
            <person name="Horinouchi S."/>
            <person name="Yoshida M."/>
        </authorList>
    </citation>
    <scope>SUBCELLULAR LOCATION [LARGE SCALE ANALYSIS]</scope>
</reference>
<sequence length="1006" mass="116401">MIQNGGNSYVDSNMNETQNDTTDNFDAEMQDLNGYISEIVDEARNVSEVDAKFLGDTSALQAEGLWSDEESDYEGSDDESNFSKTASRTEDDIANEEWEENLKAVAGFRKVRKGHKGRGRVSRADMLPSVEVQQMLSLANHLFAQEGNFDEAQKLAEEIVRIDNNVIAAWKMLGECHRQRGNGRVNIEKCLIAWMAAAHLKPKDHELWFTCAKLSESLEFWDQADYCYNRAVSAKPPNKSELKKYIWNRSVLNKEHGSLKKAAEGFKFLLQSSPYNASILKNLAEIYIKIHAPREILKQFEIAWKYFYQYPAPPIGNDIFDLPTLNLYAELLLLDHQWSNLIRLINRGVRWFRGRKSESFWDEFDDDREWDVDERRREFPNASEEHTNKEAYLLPHLFRTKLGIARLKTGELPEAELHFSVIKNLPPDYAWGMLYDIAKAYMDIERLDLALEYFVLICNHEPAQNIGLWYNMGVCYLELKEYEHAQQCMEAILIVDNSNTNALIKLAEINELQDNRDAALEIVTNIFEQRRNINELEREQSQNEDHEKNVGSQLFVGNQKVPQDKWEKRARISRSKEEARQFTIWKTEETQRRFHKLDILRQSLKKEENVSESLNEWLAIASELIDEFVSIKAFFPSEKKARARAGLLTRRTRYASLNDQLTSMINRLNDSLTRTKYGDLDLDTILRTGYFRNVSIDAWYQLFVEFSLRLTKVGSVQQAYDVLTTAMGAILFDQDTIKRQNLRWCMLACSMYARDPQGALTPLRWVFTTFQFRQDTYRLFSAVLSQGYECSRAFVDSANQKFLLRLIKLMDQLMSNSLVSGAATLVKNDDGLATVPTSYDPVLVLLYGHIMARNRSWIPAINYYSRAFAINPDCPITNLSLGLAYLHRAMQRLSDNRHYQILQGFTFLYRYYDLRVNEGLGEKQEALYNLGKAYHFIGLEHYAVKYYEAVLGLSPMSQGDKMTSSESTVSTTYDFGFEAAYNLRLIYICSGNIKLAFQISSKYLIF</sequence>
<accession>O74458</accession>
<feature type="chain" id="PRO_0000307795" description="Transcription factor tau subunit sfc4">
    <location>
        <begin position="1"/>
        <end position="1006"/>
    </location>
</feature>
<feature type="repeat" description="TPR 1" evidence="2">
    <location>
        <begin position="133"/>
        <end position="166"/>
    </location>
</feature>
<feature type="repeat" description="TPR 2" evidence="2">
    <location>
        <begin position="205"/>
        <end position="238"/>
    </location>
</feature>
<feature type="repeat" description="TPR 3" evidence="2">
    <location>
        <begin position="277"/>
        <end position="310"/>
    </location>
</feature>
<feature type="repeat" description="TPR 4" evidence="2">
    <location>
        <begin position="396"/>
        <end position="429"/>
    </location>
</feature>
<feature type="repeat" description="TPR 5" evidence="2">
    <location>
        <begin position="431"/>
        <end position="464"/>
    </location>
</feature>
<feature type="repeat" description="TPR 6" evidence="2">
    <location>
        <begin position="466"/>
        <end position="499"/>
    </location>
</feature>
<feature type="repeat" description="TPR 7" evidence="2">
    <location>
        <begin position="841"/>
        <end position="874"/>
    </location>
</feature>
<feature type="repeat" description="TPR 8" evidence="2">
    <location>
        <begin position="924"/>
        <end position="957"/>
    </location>
</feature>
<feature type="region of interest" description="Disordered" evidence="3">
    <location>
        <begin position="64"/>
        <end position="91"/>
    </location>
</feature>
<feature type="coiled-coil region" evidence="2">
    <location>
        <begin position="506"/>
        <end position="554"/>
    </location>
</feature>
<feature type="compositionally biased region" description="Acidic residues" evidence="3">
    <location>
        <begin position="66"/>
        <end position="80"/>
    </location>
</feature>
<proteinExistence type="evidence at protein level"/>
<organism>
    <name type="scientific">Schizosaccharomyces pombe (strain 972 / ATCC 24843)</name>
    <name type="common">Fission yeast</name>
    <dbReference type="NCBI Taxonomy" id="284812"/>
    <lineage>
        <taxon>Eukaryota</taxon>
        <taxon>Fungi</taxon>
        <taxon>Dikarya</taxon>
        <taxon>Ascomycota</taxon>
        <taxon>Taphrinomycotina</taxon>
        <taxon>Schizosaccharomycetes</taxon>
        <taxon>Schizosaccharomycetales</taxon>
        <taxon>Schizosaccharomycetaceae</taxon>
        <taxon>Schizosaccharomyces</taxon>
    </lineage>
</organism>
<name>SFC4_SCHPO</name>